<evidence type="ECO:0000250" key="1">
    <source>
        <dbReference type="UniProtKB" id="P21853"/>
    </source>
</evidence>
<evidence type="ECO:0000255" key="2">
    <source>
        <dbReference type="PROSITE-ProRule" id="PRU00648"/>
    </source>
</evidence>
<evidence type="ECO:0000269" key="3">
    <source>
    </source>
</evidence>
<evidence type="ECO:0000305" key="4"/>
<evidence type="ECO:0007829" key="5">
    <source>
        <dbReference type="PDB" id="7NEM"/>
    </source>
</evidence>
<feature type="signal peptide" description="Tat-type signal" evidence="2 3">
    <location>
        <begin position="1"/>
        <end position="37"/>
    </location>
</feature>
<feature type="chain" id="PRO_0000013430" description="Hydrogenase-2 small chain">
    <location>
        <begin position="38"/>
        <end position="372"/>
    </location>
</feature>
<feature type="binding site" evidence="1">
    <location>
        <position position="59"/>
    </location>
    <ligand>
        <name>[4Fe-4S] cluster</name>
        <dbReference type="ChEBI" id="CHEBI:49883"/>
        <label>1</label>
    </ligand>
</feature>
<feature type="binding site" evidence="1">
    <location>
        <position position="62"/>
    </location>
    <ligand>
        <name>[4Fe-4S] cluster</name>
        <dbReference type="ChEBI" id="CHEBI:49883"/>
        <label>1</label>
    </ligand>
</feature>
<feature type="binding site" evidence="1">
    <location>
        <position position="157"/>
    </location>
    <ligand>
        <name>[4Fe-4S] cluster</name>
        <dbReference type="ChEBI" id="CHEBI:49883"/>
        <label>1</label>
    </ligand>
</feature>
<feature type="binding site" evidence="1">
    <location>
        <position position="191"/>
    </location>
    <ligand>
        <name>[4Fe-4S] cluster</name>
        <dbReference type="ChEBI" id="CHEBI:49883"/>
        <label>1</label>
    </ligand>
</feature>
<feature type="binding site" evidence="1">
    <location>
        <position position="229"/>
    </location>
    <ligand>
        <name>[4Fe-4S] cluster</name>
        <dbReference type="ChEBI" id="CHEBI:49883"/>
        <label>2</label>
    </ligand>
</feature>
<feature type="binding site" evidence="1">
    <location>
        <position position="232"/>
    </location>
    <ligand>
        <name>[4Fe-4S] cluster</name>
        <dbReference type="ChEBI" id="CHEBI:49883"/>
        <label>2</label>
    </ligand>
</feature>
<feature type="binding site" evidence="1">
    <location>
        <position position="257"/>
    </location>
    <ligand>
        <name>[4Fe-4S] cluster</name>
        <dbReference type="ChEBI" id="CHEBI:49883"/>
        <label>2</label>
    </ligand>
</feature>
<feature type="binding site" evidence="1">
    <location>
        <position position="263"/>
    </location>
    <ligand>
        <name>[4Fe-4S] cluster</name>
        <dbReference type="ChEBI" id="CHEBI:49883"/>
        <label>2</label>
    </ligand>
</feature>
<feature type="binding site" evidence="1">
    <location>
        <position position="272"/>
    </location>
    <ligand>
        <name>[3Fe-4S] cluster</name>
        <dbReference type="ChEBI" id="CHEBI:21137"/>
    </ligand>
</feature>
<feature type="binding site" evidence="1">
    <location>
        <position position="292"/>
    </location>
    <ligand>
        <name>[3Fe-4S] cluster</name>
        <dbReference type="ChEBI" id="CHEBI:21137"/>
    </ligand>
</feature>
<feature type="binding site" evidence="1">
    <location>
        <position position="295"/>
    </location>
    <ligand>
        <name>[3Fe-4S] cluster</name>
        <dbReference type="ChEBI" id="CHEBI:21137"/>
    </ligand>
</feature>
<feature type="strand" evidence="5">
    <location>
        <begin position="50"/>
        <end position="57"/>
    </location>
</feature>
<feature type="helix" evidence="5">
    <location>
        <begin position="61"/>
        <end position="65"/>
    </location>
</feature>
<feature type="helix" evidence="5">
    <location>
        <begin position="66"/>
        <end position="68"/>
    </location>
</feature>
<feature type="helix" evidence="5">
    <location>
        <begin position="74"/>
        <end position="79"/>
    </location>
</feature>
<feature type="strand" evidence="5">
    <location>
        <begin position="83"/>
        <end position="86"/>
    </location>
</feature>
<feature type="turn" evidence="5">
    <location>
        <begin position="88"/>
        <end position="90"/>
    </location>
</feature>
<feature type="helix" evidence="5">
    <location>
        <begin position="95"/>
        <end position="108"/>
    </location>
</feature>
<feature type="turn" evidence="5">
    <location>
        <begin position="109"/>
        <end position="112"/>
    </location>
</feature>
<feature type="strand" evidence="5">
    <location>
        <begin position="113"/>
        <end position="122"/>
    </location>
</feature>
<feature type="helix" evidence="5">
    <location>
        <begin position="124"/>
        <end position="127"/>
    </location>
</feature>
<feature type="strand" evidence="5">
    <location>
        <begin position="130"/>
        <end position="132"/>
    </location>
</feature>
<feature type="helix" evidence="5">
    <location>
        <begin position="137"/>
        <end position="146"/>
    </location>
</feature>
<feature type="strand" evidence="5">
    <location>
        <begin position="148"/>
        <end position="155"/>
    </location>
</feature>
<feature type="helix" evidence="5">
    <location>
        <begin position="156"/>
        <end position="160"/>
    </location>
</feature>
<feature type="helix" evidence="5">
    <location>
        <begin position="162"/>
        <end position="165"/>
    </location>
</feature>
<feature type="helix" evidence="5">
    <location>
        <begin position="176"/>
        <end position="179"/>
    </location>
</feature>
<feature type="strand" evidence="5">
    <location>
        <begin position="185"/>
        <end position="188"/>
    </location>
</feature>
<feature type="strand" evidence="5">
    <location>
        <begin position="190"/>
        <end position="192"/>
    </location>
</feature>
<feature type="helix" evidence="5">
    <location>
        <begin position="195"/>
        <end position="208"/>
    </location>
</feature>
<feature type="helix" evidence="5">
    <location>
        <begin position="221"/>
        <end position="224"/>
    </location>
</feature>
<feature type="strand" evidence="5">
    <location>
        <begin position="225"/>
        <end position="227"/>
    </location>
</feature>
<feature type="helix" evidence="5">
    <location>
        <begin position="228"/>
        <end position="231"/>
    </location>
</feature>
<feature type="helix" evidence="5">
    <location>
        <begin position="235"/>
        <end position="240"/>
    </location>
</feature>
<feature type="helix" evidence="5">
    <location>
        <begin position="252"/>
        <end position="254"/>
    </location>
</feature>
<feature type="helix" evidence="5">
    <location>
        <begin position="259"/>
        <end position="261"/>
    </location>
</feature>
<feature type="helix" evidence="5">
    <location>
        <begin position="265"/>
        <end position="267"/>
    </location>
</feature>
<feature type="strand" evidence="5">
    <location>
        <begin position="269"/>
        <end position="271"/>
    </location>
</feature>
<feature type="turn" evidence="5">
    <location>
        <begin position="272"/>
        <end position="275"/>
    </location>
</feature>
<feature type="strand" evidence="5">
    <location>
        <begin position="280"/>
        <end position="282"/>
    </location>
</feature>
<feature type="helix" evidence="5">
    <location>
        <begin position="285"/>
        <end position="288"/>
    </location>
</feature>
<feature type="turn" evidence="5">
    <location>
        <begin position="298"/>
        <end position="303"/>
    </location>
</feature>
<comment type="function">
    <text>This is one of three E.coli hydrogenases synthesized in response to different physiological conditions. HYD2 is involved in hydrogen uptake.</text>
</comment>
<comment type="catalytic activity">
    <reaction>
        <text>H2 + A = AH2</text>
        <dbReference type="Rhea" id="RHEA:12116"/>
        <dbReference type="ChEBI" id="CHEBI:13193"/>
        <dbReference type="ChEBI" id="CHEBI:17499"/>
        <dbReference type="ChEBI" id="CHEBI:18276"/>
        <dbReference type="EC" id="1.12.99.6"/>
    </reaction>
</comment>
<comment type="cofactor">
    <cofactor evidence="1">
        <name>[4Fe-4S] cluster</name>
        <dbReference type="ChEBI" id="CHEBI:49883"/>
    </cofactor>
    <text evidence="1">Binds 2 [4Fe-4S] clusters.</text>
</comment>
<comment type="cofactor">
    <cofactor evidence="1">
        <name>[3Fe-4S] cluster</name>
        <dbReference type="ChEBI" id="CHEBI:21137"/>
    </cofactor>
    <text evidence="1">Binds 1 [3Fe-4S] cluster.</text>
</comment>
<comment type="subunit">
    <text>Heterodimer of a large and a small subunit.</text>
</comment>
<comment type="interaction">
    <interactant intactId="EBI-552619">
        <id>P69741</id>
    </interactant>
    <interactant intactId="EBI-552588">
        <id>P0AAN1</id>
        <label>hybE</label>
    </interactant>
    <organismsDiffer>false</organismsDiffer>
    <experiments>6</experiments>
</comment>
<comment type="subcellular location">
    <subcellularLocation>
        <location>Cell membrane</location>
        <topology>Peripheral membrane protein</topology>
        <orientation>Periplasmic side</orientation>
    </subcellularLocation>
    <subcellularLocation>
        <location>Periplasm</location>
    </subcellularLocation>
</comment>
<comment type="PTM">
    <text>Exported by the Tat system. The position of the signal peptide cleavage has been experimentally proven. Can also be exported by the Sec system.</text>
</comment>
<comment type="similarity">
    <text evidence="4">Belongs to the [NiFe]/[NiFeSe] hydrogenase small subunit family.</text>
</comment>
<proteinExistence type="evidence at protein level"/>
<organism>
    <name type="scientific">Escherichia coli (strain K12)</name>
    <dbReference type="NCBI Taxonomy" id="83333"/>
    <lineage>
        <taxon>Bacteria</taxon>
        <taxon>Pseudomonadati</taxon>
        <taxon>Pseudomonadota</taxon>
        <taxon>Gammaproteobacteria</taxon>
        <taxon>Enterobacterales</taxon>
        <taxon>Enterobacteriaceae</taxon>
        <taxon>Escherichia</taxon>
    </lineage>
</organism>
<name>MBHT_ECOLI</name>
<keyword id="KW-0002">3D-structure</keyword>
<keyword id="KW-0003">3Fe-4S</keyword>
<keyword id="KW-0004">4Fe-4S</keyword>
<keyword id="KW-1003">Cell membrane</keyword>
<keyword id="KW-0903">Direct protein sequencing</keyword>
<keyword id="KW-0408">Iron</keyword>
<keyword id="KW-0411">Iron-sulfur</keyword>
<keyword id="KW-0472">Membrane</keyword>
<keyword id="KW-0479">Metal-binding</keyword>
<keyword id="KW-0560">Oxidoreductase</keyword>
<keyword id="KW-0574">Periplasm</keyword>
<keyword id="KW-1185">Reference proteome</keyword>
<keyword id="KW-0732">Signal</keyword>
<protein>
    <recommendedName>
        <fullName>Hydrogenase-2 small chain</fullName>
        <shortName>HYD2</shortName>
        <ecNumber>1.12.99.6</ecNumber>
    </recommendedName>
    <alternativeName>
        <fullName>Membrane-bound hydrogenase 2 small subunit</fullName>
    </alternativeName>
    <alternativeName>
        <fullName>NiFe hydrogenase</fullName>
    </alternativeName>
</protein>
<sequence>MTGDNTLIHSHGINRRDFMKLCAALAATMGLSSKAAAEMAESVTNPQRPPVIWIGAQECTGCTESLLRATHPTVENLVLETISLEYHEVLSAAFGHQVEENKHNALEKYKGQYVLVVDGSIPLKDNGIYCMVAGEPIVDHIRKAAEGAAAIIAIGSCSAWGGVAAAGVNPTGAVSLQEVLPGKTVINIPGCPPNPHNFLATVAHIITYGKPPKLDDKNRPTFAYGRLIHEHCERRPHFDAGRFAKEFGDEGHREGWCLYHLGCKGPETYGNCSTLQFCDVGGVWPVAIGHPCYGCNEEGIGFHKGIHQLANVENQTPRSQKPDVNAKEGGNVSAGAIGLLGGVVGLVAGVSVMAVRELGRQQKKDNADSRGE</sequence>
<accession>P69741</accession>
<accession>Q2M9J8</accession>
<accession>Q46847</accession>
<dbReference type="EC" id="1.12.99.6"/>
<dbReference type="EMBL" id="U28377">
    <property type="protein sequence ID" value="AAA69164.1"/>
    <property type="molecule type" value="Genomic_DNA"/>
</dbReference>
<dbReference type="EMBL" id="U00096">
    <property type="protein sequence ID" value="AAC76033.1"/>
    <property type="molecule type" value="Genomic_DNA"/>
</dbReference>
<dbReference type="EMBL" id="AP009048">
    <property type="protein sequence ID" value="BAE77058.1"/>
    <property type="molecule type" value="Genomic_DNA"/>
</dbReference>
<dbReference type="PIR" id="C65086">
    <property type="entry name" value="C65086"/>
</dbReference>
<dbReference type="RefSeq" id="NP_417471.1">
    <property type="nucleotide sequence ID" value="NC_000913.3"/>
</dbReference>
<dbReference type="RefSeq" id="WP_000145410.1">
    <property type="nucleotide sequence ID" value="NZ_STEB01000001.1"/>
</dbReference>
<dbReference type="PDB" id="6EHQ">
    <property type="method" value="X-ray"/>
    <property type="resolution" value="2.20 A"/>
    <property type="chains" value="S/T=38-330"/>
</dbReference>
<dbReference type="PDB" id="6EHS">
    <property type="method" value="X-ray"/>
    <property type="resolution" value="1.50 A"/>
    <property type="chains" value="S/T=38-330"/>
</dbReference>
<dbReference type="PDB" id="6EN9">
    <property type="method" value="X-ray"/>
    <property type="resolution" value="1.50 A"/>
    <property type="chains" value="S/T=39-331"/>
</dbReference>
<dbReference type="PDB" id="6G7M">
    <property type="method" value="X-ray"/>
    <property type="resolution" value="1.71 A"/>
    <property type="chains" value="S/T=38-333"/>
</dbReference>
<dbReference type="PDB" id="6GAM">
    <property type="method" value="X-ray"/>
    <property type="resolution" value="1.40 A"/>
    <property type="chains" value="S/T=38-330"/>
</dbReference>
<dbReference type="PDB" id="6GAN">
    <property type="method" value="X-ray"/>
    <property type="resolution" value="1.60 A"/>
    <property type="chains" value="S/T=38-330"/>
</dbReference>
<dbReference type="PDB" id="6SYO">
    <property type="method" value="X-ray"/>
    <property type="resolution" value="1.25 A"/>
    <property type="chains" value="SSS/TTT=39-331"/>
</dbReference>
<dbReference type="PDB" id="6SYX">
    <property type="method" value="X-ray"/>
    <property type="resolution" value="1.30 A"/>
    <property type="chains" value="SSS/TTT=39-330"/>
</dbReference>
<dbReference type="PDB" id="6SZD">
    <property type="method" value="X-ray"/>
    <property type="resolution" value="1.50 A"/>
    <property type="chains" value="SSS/TTT=39-330"/>
</dbReference>
<dbReference type="PDB" id="6SZK">
    <property type="method" value="X-ray"/>
    <property type="resolution" value="1.20 A"/>
    <property type="chains" value="SSS/TTT=39-330"/>
</dbReference>
<dbReference type="PDB" id="7NEM">
    <property type="method" value="X-ray"/>
    <property type="resolution" value="1.35 A"/>
    <property type="chains" value="S/T=39-330"/>
</dbReference>
<dbReference type="PDBsum" id="6EHQ"/>
<dbReference type="PDBsum" id="6EHS"/>
<dbReference type="PDBsum" id="6EN9"/>
<dbReference type="PDBsum" id="6G7M"/>
<dbReference type="PDBsum" id="6GAM"/>
<dbReference type="PDBsum" id="6GAN"/>
<dbReference type="PDBsum" id="6SYO"/>
<dbReference type="PDBsum" id="6SYX"/>
<dbReference type="PDBsum" id="6SZD"/>
<dbReference type="PDBsum" id="6SZK"/>
<dbReference type="PDBsum" id="7NEM"/>
<dbReference type="SMR" id="P69741"/>
<dbReference type="BioGRID" id="4261299">
    <property type="interactions" value="264"/>
</dbReference>
<dbReference type="BioGRID" id="850267">
    <property type="interactions" value="10"/>
</dbReference>
<dbReference type="ComplexPortal" id="CPX-282">
    <property type="entry name" value="Hydrogenase-2 complex"/>
</dbReference>
<dbReference type="DIP" id="DIP-36024N"/>
<dbReference type="FunCoup" id="P69741">
    <property type="interactions" value="274"/>
</dbReference>
<dbReference type="IntAct" id="P69741">
    <property type="interactions" value="17"/>
</dbReference>
<dbReference type="MINT" id="P69741"/>
<dbReference type="STRING" id="511145.b2997"/>
<dbReference type="TCDB" id="3.D.7.2.5">
    <property type="family name" value="the h2:heterodisulfide oxidoreductase (hho) family"/>
</dbReference>
<dbReference type="jPOST" id="P69741"/>
<dbReference type="PaxDb" id="511145-b2997"/>
<dbReference type="EnsemblBacteria" id="AAC76033">
    <property type="protein sequence ID" value="AAC76033"/>
    <property type="gene ID" value="b2997"/>
</dbReference>
<dbReference type="GeneID" id="93778988"/>
<dbReference type="GeneID" id="945902"/>
<dbReference type="KEGG" id="ecj:JW2965"/>
<dbReference type="KEGG" id="eco:b2997"/>
<dbReference type="KEGG" id="ecoc:C3026_16390"/>
<dbReference type="PATRIC" id="fig|1411691.4.peg.3732"/>
<dbReference type="EchoBASE" id="EB2828"/>
<dbReference type="eggNOG" id="COG1740">
    <property type="taxonomic scope" value="Bacteria"/>
</dbReference>
<dbReference type="HOGENOM" id="CLU_046107_0_1_6"/>
<dbReference type="InParanoid" id="P69741"/>
<dbReference type="OMA" id="VPGCPIQ"/>
<dbReference type="OrthoDB" id="9766729at2"/>
<dbReference type="PhylomeDB" id="P69741"/>
<dbReference type="BioCyc" id="EcoCyc:MONOMER0-145"/>
<dbReference type="BioCyc" id="MetaCyc:MONOMER0-145"/>
<dbReference type="PHI-base" id="PHI:10996"/>
<dbReference type="PRO" id="PR:P69741"/>
<dbReference type="Proteomes" id="UP000000625">
    <property type="component" value="Chromosome"/>
</dbReference>
<dbReference type="GO" id="GO:0044569">
    <property type="term" value="C:[Ni-Fe] hydrogenase complex"/>
    <property type="evidence" value="ECO:0000318"/>
    <property type="project" value="GO_Central"/>
</dbReference>
<dbReference type="GO" id="GO:0009375">
    <property type="term" value="C:ferredoxin hydrogenase complex"/>
    <property type="evidence" value="ECO:0007669"/>
    <property type="project" value="InterPro"/>
</dbReference>
<dbReference type="GO" id="GO:0016020">
    <property type="term" value="C:membrane"/>
    <property type="evidence" value="ECO:0007005"/>
    <property type="project" value="UniProtKB"/>
</dbReference>
<dbReference type="GO" id="GO:0042597">
    <property type="term" value="C:periplasmic space"/>
    <property type="evidence" value="ECO:0007669"/>
    <property type="project" value="UniProtKB-SubCell"/>
</dbReference>
<dbReference type="GO" id="GO:0005886">
    <property type="term" value="C:plasma membrane"/>
    <property type="evidence" value="ECO:0007669"/>
    <property type="project" value="UniProtKB-SubCell"/>
</dbReference>
<dbReference type="GO" id="GO:0051538">
    <property type="term" value="F:3 iron, 4 sulfur cluster binding"/>
    <property type="evidence" value="ECO:0007669"/>
    <property type="project" value="UniProtKB-KW"/>
</dbReference>
<dbReference type="GO" id="GO:0051539">
    <property type="term" value="F:4 iron, 4 sulfur cluster binding"/>
    <property type="evidence" value="ECO:0007669"/>
    <property type="project" value="UniProtKB-KW"/>
</dbReference>
<dbReference type="GO" id="GO:0009055">
    <property type="term" value="F:electron transfer activity"/>
    <property type="evidence" value="ECO:0000318"/>
    <property type="project" value="GO_Central"/>
</dbReference>
<dbReference type="GO" id="GO:0008901">
    <property type="term" value="F:ferredoxin hydrogenase activity"/>
    <property type="evidence" value="ECO:0007669"/>
    <property type="project" value="InterPro"/>
</dbReference>
<dbReference type="GO" id="GO:0033748">
    <property type="term" value="F:hydrogenase (acceptor) activity"/>
    <property type="evidence" value="ECO:0007669"/>
    <property type="project" value="UniProtKB-EC"/>
</dbReference>
<dbReference type="GO" id="GO:0051536">
    <property type="term" value="F:iron-sulfur cluster binding"/>
    <property type="evidence" value="ECO:0000255"/>
    <property type="project" value="EcoCyc"/>
</dbReference>
<dbReference type="GO" id="GO:0046872">
    <property type="term" value="F:metal ion binding"/>
    <property type="evidence" value="ECO:0007669"/>
    <property type="project" value="UniProtKB-KW"/>
</dbReference>
<dbReference type="GO" id="GO:0009061">
    <property type="term" value="P:anaerobic respiration"/>
    <property type="evidence" value="ECO:0000269"/>
    <property type="project" value="EcoCyc"/>
</dbReference>
<dbReference type="FunFam" id="3.40.50.700:FF:000001">
    <property type="entry name" value="Hydrogenase 2 small subunit"/>
    <property type="match status" value="1"/>
</dbReference>
<dbReference type="FunFam" id="4.10.480.10:FF:000001">
    <property type="entry name" value="Hydrogenase 2 small subunit"/>
    <property type="match status" value="1"/>
</dbReference>
<dbReference type="Gene3D" id="4.10.480.10">
    <property type="entry name" value="Cytochrome-c3 hydrogenase, C-terminal domain"/>
    <property type="match status" value="1"/>
</dbReference>
<dbReference type="Gene3D" id="3.40.50.700">
    <property type="entry name" value="NADH:ubiquinone oxidoreductase-like, 20kDa subunit"/>
    <property type="match status" value="1"/>
</dbReference>
<dbReference type="InterPro" id="IPR027394">
    <property type="entry name" value="Cytochrome-c3_hydrogenase_C"/>
</dbReference>
<dbReference type="InterPro" id="IPR006137">
    <property type="entry name" value="NADH_UbQ_OxRdtase-like_20kDa"/>
</dbReference>
<dbReference type="InterPro" id="IPR037148">
    <property type="entry name" value="NiFe-Hase_small_C_sf"/>
</dbReference>
<dbReference type="InterPro" id="IPR037024">
    <property type="entry name" value="NiFe_Hase_small_N_sf"/>
</dbReference>
<dbReference type="InterPro" id="IPR001821">
    <property type="entry name" value="NiFe_hydrogenase_ssu"/>
</dbReference>
<dbReference type="InterPro" id="IPR006311">
    <property type="entry name" value="TAT_signal"/>
</dbReference>
<dbReference type="InterPro" id="IPR019546">
    <property type="entry name" value="TAT_signal_bac_arc"/>
</dbReference>
<dbReference type="NCBIfam" id="TIGR00391">
    <property type="entry name" value="hydA"/>
    <property type="match status" value="1"/>
</dbReference>
<dbReference type="NCBIfam" id="NF007779">
    <property type="entry name" value="PRK10468.1"/>
    <property type="match status" value="1"/>
</dbReference>
<dbReference type="NCBIfam" id="TIGR01409">
    <property type="entry name" value="TAT_signal_seq"/>
    <property type="match status" value="1"/>
</dbReference>
<dbReference type="PANTHER" id="PTHR30013:SF7">
    <property type="entry name" value="HYDROGENASE-2 SMALL CHAIN"/>
    <property type="match status" value="1"/>
</dbReference>
<dbReference type="PANTHER" id="PTHR30013">
    <property type="entry name" value="NIFE / NIFESE HYDROGENASE SMALL SUBUNIT FAMILY MEMBER"/>
    <property type="match status" value="1"/>
</dbReference>
<dbReference type="Pfam" id="PF14720">
    <property type="entry name" value="NiFe_hyd_SSU_C"/>
    <property type="match status" value="1"/>
</dbReference>
<dbReference type="Pfam" id="PF01058">
    <property type="entry name" value="Oxidored_q6"/>
    <property type="match status" value="1"/>
</dbReference>
<dbReference type="PIRSF" id="PIRSF000310">
    <property type="entry name" value="NiFe_hyd_ssu"/>
    <property type="match status" value="1"/>
</dbReference>
<dbReference type="PRINTS" id="PR00614">
    <property type="entry name" value="NIHGNASESMLL"/>
</dbReference>
<dbReference type="SUPFAM" id="SSF56770">
    <property type="entry name" value="HydA/Nqo6-like"/>
    <property type="match status" value="1"/>
</dbReference>
<dbReference type="PROSITE" id="PS51318">
    <property type="entry name" value="TAT"/>
    <property type="match status" value="1"/>
</dbReference>
<gene>
    <name type="primary">hybO</name>
    <name type="synonym">yghV</name>
    <name type="ordered locus">b2997</name>
    <name type="ordered locus">JW2965</name>
</gene>
<reference key="1">
    <citation type="journal article" date="1997" name="Science">
        <title>The complete genome sequence of Escherichia coli K-12.</title>
        <authorList>
            <person name="Blattner F.R."/>
            <person name="Plunkett G. III"/>
            <person name="Bloch C.A."/>
            <person name="Perna N.T."/>
            <person name="Burland V."/>
            <person name="Riley M."/>
            <person name="Collado-Vides J."/>
            <person name="Glasner J.D."/>
            <person name="Rode C.K."/>
            <person name="Mayhew G.F."/>
            <person name="Gregor J."/>
            <person name="Davis N.W."/>
            <person name="Kirkpatrick H.A."/>
            <person name="Goeden M.A."/>
            <person name="Rose D.J."/>
            <person name="Mau B."/>
            <person name="Shao Y."/>
        </authorList>
    </citation>
    <scope>NUCLEOTIDE SEQUENCE [LARGE SCALE GENOMIC DNA]</scope>
    <source>
        <strain>K12 / MG1655 / ATCC 47076</strain>
    </source>
</reference>
<reference key="2">
    <citation type="journal article" date="2006" name="Mol. Syst. Biol.">
        <title>Highly accurate genome sequences of Escherichia coli K-12 strains MG1655 and W3110.</title>
        <authorList>
            <person name="Hayashi K."/>
            <person name="Morooka N."/>
            <person name="Yamamoto Y."/>
            <person name="Fujita K."/>
            <person name="Isono K."/>
            <person name="Choi S."/>
            <person name="Ohtsubo E."/>
            <person name="Baba T."/>
            <person name="Wanner B.L."/>
            <person name="Mori H."/>
            <person name="Horiuchi T."/>
        </authorList>
    </citation>
    <scope>NUCLEOTIDE SEQUENCE [LARGE SCALE GENOMIC DNA]</scope>
    <source>
        <strain>K12 / W3110 / ATCC 27325 / DSM 5911</strain>
    </source>
</reference>
<reference key="3">
    <citation type="journal article" date="1998" name="Eur. J. Biochem.">
        <title>Reassignment of the gene encoding the Escherichia coli hydrogenase 2 small subunit -- identification of a soluble precursor of the small subunit in a hypB mutant.</title>
        <authorList>
            <person name="Sargent F."/>
            <person name="Ballantine S.P."/>
            <person name="Rugman P.A."/>
            <person name="Palmer T."/>
            <person name="Boxer D.H."/>
        </authorList>
    </citation>
    <scope>PROTEIN SEQUENCE OF 38-47 AND 218-234</scope>
    <scope>CHARACTERIZATION</scope>
    <scope>EXPORT VIA THE TAT-SYSTEM</scope>
    <source>
        <strain>K12 / MC4100 / ATCC 35695 / DSM 6574</strain>
    </source>
</reference>
<reference key="4">
    <citation type="journal article" date="2007" name="J. Biol. Chem.">
        <title>Export pathway selectivity of Escherichia coli twin arginine translocation signal peptides.</title>
        <authorList>
            <person name="Tullman-Ercek D."/>
            <person name="DeLisa M.P."/>
            <person name="Kawarasaki Y."/>
            <person name="Iranpour P."/>
            <person name="Ribnicky B."/>
            <person name="Palmer T."/>
            <person name="Georgiou G."/>
        </authorList>
    </citation>
    <scope>EXPORT VIA THE TAT-SYSTEM AND THE SEC-SYSTEM</scope>
</reference>